<feature type="chain" id="PRO_1000070611" description="Xanthine-guanine phosphoribosyltransferase">
    <location>
        <begin position="1"/>
        <end position="165"/>
    </location>
</feature>
<feature type="binding site" evidence="1">
    <location>
        <begin position="41"/>
        <end position="42"/>
    </location>
    <ligand>
        <name>5-phospho-alpha-D-ribose 1-diphosphate</name>
        <dbReference type="ChEBI" id="CHEBI:58017"/>
    </ligand>
</feature>
<feature type="binding site" evidence="1">
    <location>
        <begin position="98"/>
        <end position="106"/>
    </location>
    <ligand>
        <name>5-phospho-alpha-D-ribose 1-diphosphate</name>
        <dbReference type="ChEBI" id="CHEBI:58017"/>
    </ligand>
</feature>
<feature type="binding site" evidence="1">
    <location>
        <position position="99"/>
    </location>
    <ligand>
        <name>Mg(2+)</name>
        <dbReference type="ChEBI" id="CHEBI:18420"/>
    </ligand>
</feature>
<feature type="binding site" evidence="1">
    <location>
        <begin position="102"/>
        <end position="106"/>
    </location>
    <ligand>
        <name>GMP</name>
        <dbReference type="ChEBI" id="CHEBI:58115"/>
    </ligand>
</feature>
<feature type="binding site" evidence="1">
    <location>
        <position position="102"/>
    </location>
    <ligand>
        <name>guanine</name>
        <dbReference type="ChEBI" id="CHEBI:16235"/>
    </ligand>
</feature>
<feature type="binding site" evidence="1">
    <location>
        <position position="102"/>
    </location>
    <ligand>
        <name>xanthine</name>
        <dbReference type="ChEBI" id="CHEBI:17712"/>
    </ligand>
</feature>
<feature type="binding site" evidence="1">
    <location>
        <begin position="144"/>
        <end position="145"/>
    </location>
    <ligand>
        <name>GMP</name>
        <dbReference type="ChEBI" id="CHEBI:58115"/>
    </ligand>
</feature>
<feature type="binding site" evidence="1">
    <location>
        <position position="145"/>
    </location>
    <ligand>
        <name>guanine</name>
        <dbReference type="ChEBI" id="CHEBI:16235"/>
    </ligand>
</feature>
<feature type="binding site" evidence="1">
    <location>
        <position position="145"/>
    </location>
    <ligand>
        <name>xanthine</name>
        <dbReference type="ChEBI" id="CHEBI:17712"/>
    </ligand>
</feature>
<gene>
    <name evidence="1" type="primary">gpt</name>
    <name type="ordered locus">Oant_2133</name>
</gene>
<protein>
    <recommendedName>
        <fullName evidence="1">Xanthine-guanine phosphoribosyltransferase</fullName>
        <shortName evidence="1">XGPRT</shortName>
        <ecNumber evidence="1">2.4.2.-</ecNumber>
        <ecNumber evidence="1">2.4.2.22</ecNumber>
    </recommendedName>
    <alternativeName>
        <fullName evidence="1">Xanthine phosphoribosyltransferase</fullName>
    </alternativeName>
</protein>
<sequence>MSLPDKAFPVSWDQFHRDARALAWRIAGMNRDWHAIVAITRGGLVPAAIVCRELGIRLIETVCIASYHDYTSQGDMQILKGVSETLLENGGEGVIVVDDLTDTGKTAAIVREMMPKAHFATVYAKPKGRPLIDTFVTEVSQDTWIYFPWDMGFTYQEPIAGDKRG</sequence>
<organism>
    <name type="scientific">Brucella anthropi (strain ATCC 49188 / DSM 6882 / CCUG 24695 / JCM 21032 / LMG 3331 / NBRC 15819 / NCTC 12168 / Alc 37)</name>
    <name type="common">Ochrobactrum anthropi</name>
    <dbReference type="NCBI Taxonomy" id="439375"/>
    <lineage>
        <taxon>Bacteria</taxon>
        <taxon>Pseudomonadati</taxon>
        <taxon>Pseudomonadota</taxon>
        <taxon>Alphaproteobacteria</taxon>
        <taxon>Hyphomicrobiales</taxon>
        <taxon>Brucellaceae</taxon>
        <taxon>Brucella/Ochrobactrum group</taxon>
        <taxon>Brucella</taxon>
    </lineage>
</organism>
<proteinExistence type="inferred from homology"/>
<reference key="1">
    <citation type="journal article" date="2011" name="J. Bacteriol.">
        <title>Genome of Ochrobactrum anthropi ATCC 49188 T, a versatile opportunistic pathogen and symbiont of several eukaryotic hosts.</title>
        <authorList>
            <person name="Chain P.S."/>
            <person name="Lang D.M."/>
            <person name="Comerci D.J."/>
            <person name="Malfatti S.A."/>
            <person name="Vergez L.M."/>
            <person name="Shin M."/>
            <person name="Ugalde R.A."/>
            <person name="Garcia E."/>
            <person name="Tolmasky M.E."/>
        </authorList>
    </citation>
    <scope>NUCLEOTIDE SEQUENCE [LARGE SCALE GENOMIC DNA]</scope>
    <source>
        <strain>ATCC 49188 / DSM 6882 / CCUG 24695 / JCM 21032 / LMG 3331 / NBRC 15819 / NCTC 12168 / Alc 37</strain>
    </source>
</reference>
<comment type="function">
    <text evidence="1">Purine salvage pathway enzyme that catalyzes the transfer of the ribosyl-5-phosphate group from 5-phospho-alpha-D-ribose 1-diphosphate (PRPP) to the N9 position of the 6-oxopurines guanine and xanthine to form the corresponding ribonucleotides GMP (guanosine 5'-monophosphate) and XMP (xanthosine 5'-monophosphate), with the release of PPi. To a lesser extent, also acts on hypoxanthine.</text>
</comment>
<comment type="catalytic activity">
    <reaction evidence="1">
        <text>GMP + diphosphate = guanine + 5-phospho-alpha-D-ribose 1-diphosphate</text>
        <dbReference type="Rhea" id="RHEA:25424"/>
        <dbReference type="ChEBI" id="CHEBI:16235"/>
        <dbReference type="ChEBI" id="CHEBI:33019"/>
        <dbReference type="ChEBI" id="CHEBI:58017"/>
        <dbReference type="ChEBI" id="CHEBI:58115"/>
    </reaction>
    <physiologicalReaction direction="right-to-left" evidence="1">
        <dbReference type="Rhea" id="RHEA:25426"/>
    </physiologicalReaction>
</comment>
<comment type="catalytic activity">
    <reaction evidence="1">
        <text>XMP + diphosphate = xanthine + 5-phospho-alpha-D-ribose 1-diphosphate</text>
        <dbReference type="Rhea" id="RHEA:10800"/>
        <dbReference type="ChEBI" id="CHEBI:17712"/>
        <dbReference type="ChEBI" id="CHEBI:33019"/>
        <dbReference type="ChEBI" id="CHEBI:57464"/>
        <dbReference type="ChEBI" id="CHEBI:58017"/>
        <dbReference type="EC" id="2.4.2.22"/>
    </reaction>
    <physiologicalReaction direction="right-to-left" evidence="1">
        <dbReference type="Rhea" id="RHEA:10802"/>
    </physiologicalReaction>
</comment>
<comment type="catalytic activity">
    <reaction evidence="1">
        <text>IMP + diphosphate = hypoxanthine + 5-phospho-alpha-D-ribose 1-diphosphate</text>
        <dbReference type="Rhea" id="RHEA:17973"/>
        <dbReference type="ChEBI" id="CHEBI:17368"/>
        <dbReference type="ChEBI" id="CHEBI:33019"/>
        <dbReference type="ChEBI" id="CHEBI:58017"/>
        <dbReference type="ChEBI" id="CHEBI:58053"/>
    </reaction>
    <physiologicalReaction direction="right-to-left" evidence="1">
        <dbReference type="Rhea" id="RHEA:17975"/>
    </physiologicalReaction>
</comment>
<comment type="cofactor">
    <cofactor evidence="1">
        <name>Mg(2+)</name>
        <dbReference type="ChEBI" id="CHEBI:18420"/>
    </cofactor>
</comment>
<comment type="pathway">
    <text evidence="1">Purine metabolism; GMP biosynthesis via salvage pathway; GMP from guanine: step 1/1.</text>
</comment>
<comment type="pathway">
    <text evidence="1">Purine metabolism; XMP biosynthesis via salvage pathway; XMP from xanthine: step 1/1.</text>
</comment>
<comment type="subunit">
    <text evidence="1">Homotetramer.</text>
</comment>
<comment type="subcellular location">
    <subcellularLocation>
        <location evidence="1">Cell inner membrane</location>
        <topology evidence="1">Peripheral membrane protein</topology>
    </subcellularLocation>
</comment>
<comment type="similarity">
    <text evidence="1">Belongs to the purine/pyrimidine phosphoribosyltransferase family. XGPT subfamily.</text>
</comment>
<keyword id="KW-0997">Cell inner membrane</keyword>
<keyword id="KW-1003">Cell membrane</keyword>
<keyword id="KW-0328">Glycosyltransferase</keyword>
<keyword id="KW-0460">Magnesium</keyword>
<keyword id="KW-0472">Membrane</keyword>
<keyword id="KW-0479">Metal-binding</keyword>
<keyword id="KW-0660">Purine salvage</keyword>
<keyword id="KW-1185">Reference proteome</keyword>
<keyword id="KW-0808">Transferase</keyword>
<dbReference type="EC" id="2.4.2.-" evidence="1"/>
<dbReference type="EC" id="2.4.2.22" evidence="1"/>
<dbReference type="EMBL" id="CP000758">
    <property type="protein sequence ID" value="ABS14849.1"/>
    <property type="molecule type" value="Genomic_DNA"/>
</dbReference>
<dbReference type="RefSeq" id="WP_012092033.1">
    <property type="nucleotide sequence ID" value="NC_009667.1"/>
</dbReference>
<dbReference type="SMR" id="A6X0U5"/>
<dbReference type="STRING" id="439375.Oant_2133"/>
<dbReference type="KEGG" id="oan:Oant_2133"/>
<dbReference type="PATRIC" id="fig|439375.7.peg.2240"/>
<dbReference type="eggNOG" id="COG2236">
    <property type="taxonomic scope" value="Bacteria"/>
</dbReference>
<dbReference type="HOGENOM" id="CLU_080904_3_0_5"/>
<dbReference type="PhylomeDB" id="A6X0U5"/>
<dbReference type="UniPathway" id="UPA00602">
    <property type="reaction ID" value="UER00658"/>
</dbReference>
<dbReference type="UniPathway" id="UPA00909">
    <property type="reaction ID" value="UER00887"/>
</dbReference>
<dbReference type="Proteomes" id="UP000002301">
    <property type="component" value="Chromosome 1"/>
</dbReference>
<dbReference type="GO" id="GO:0005886">
    <property type="term" value="C:plasma membrane"/>
    <property type="evidence" value="ECO:0007669"/>
    <property type="project" value="UniProtKB-SubCell"/>
</dbReference>
<dbReference type="GO" id="GO:0052657">
    <property type="term" value="F:guanine phosphoribosyltransferase activity"/>
    <property type="evidence" value="ECO:0007669"/>
    <property type="project" value="RHEA"/>
</dbReference>
<dbReference type="GO" id="GO:0004422">
    <property type="term" value="F:hypoxanthine phosphoribosyltransferase activity"/>
    <property type="evidence" value="ECO:0007669"/>
    <property type="project" value="RHEA"/>
</dbReference>
<dbReference type="GO" id="GO:0000287">
    <property type="term" value="F:magnesium ion binding"/>
    <property type="evidence" value="ECO:0007669"/>
    <property type="project" value="UniProtKB-UniRule"/>
</dbReference>
<dbReference type="GO" id="GO:0000310">
    <property type="term" value="F:xanthine phosphoribosyltransferase activity"/>
    <property type="evidence" value="ECO:0007669"/>
    <property type="project" value="UniProtKB-UniRule"/>
</dbReference>
<dbReference type="GO" id="GO:0032263">
    <property type="term" value="P:GMP salvage"/>
    <property type="evidence" value="ECO:0007669"/>
    <property type="project" value="UniProtKB-UniRule"/>
</dbReference>
<dbReference type="GO" id="GO:0006166">
    <property type="term" value="P:purine ribonucleoside salvage"/>
    <property type="evidence" value="ECO:0007669"/>
    <property type="project" value="UniProtKB-KW"/>
</dbReference>
<dbReference type="GO" id="GO:0032265">
    <property type="term" value="P:XMP salvage"/>
    <property type="evidence" value="ECO:0007669"/>
    <property type="project" value="UniProtKB-UniRule"/>
</dbReference>
<dbReference type="CDD" id="cd06223">
    <property type="entry name" value="PRTases_typeI"/>
    <property type="match status" value="1"/>
</dbReference>
<dbReference type="Gene3D" id="3.40.50.2020">
    <property type="match status" value="1"/>
</dbReference>
<dbReference type="HAMAP" id="MF_01903">
    <property type="entry name" value="XGPRT"/>
    <property type="match status" value="1"/>
</dbReference>
<dbReference type="InterPro" id="IPR000836">
    <property type="entry name" value="PRibTrfase_dom"/>
</dbReference>
<dbReference type="InterPro" id="IPR029057">
    <property type="entry name" value="PRTase-like"/>
</dbReference>
<dbReference type="InterPro" id="IPR023747">
    <property type="entry name" value="Xanthine_Guanine_PRibTrfase"/>
</dbReference>
<dbReference type="NCBIfam" id="NF006613">
    <property type="entry name" value="PRK09177.1"/>
    <property type="match status" value="1"/>
</dbReference>
<dbReference type="PANTHER" id="PTHR39563">
    <property type="entry name" value="XANTHINE PHOSPHORIBOSYLTRANSFERASE"/>
    <property type="match status" value="1"/>
</dbReference>
<dbReference type="PANTHER" id="PTHR39563:SF1">
    <property type="entry name" value="XANTHINE-GUANINE PHOSPHORIBOSYLTRANSFERASE"/>
    <property type="match status" value="1"/>
</dbReference>
<dbReference type="Pfam" id="PF00156">
    <property type="entry name" value="Pribosyltran"/>
    <property type="match status" value="1"/>
</dbReference>
<dbReference type="SUPFAM" id="SSF53271">
    <property type="entry name" value="PRTase-like"/>
    <property type="match status" value="1"/>
</dbReference>
<accession>A6X0U5</accession>
<evidence type="ECO:0000255" key="1">
    <source>
        <dbReference type="HAMAP-Rule" id="MF_01903"/>
    </source>
</evidence>
<name>XGPT_BRUA4</name>